<protein>
    <recommendedName>
        <fullName evidence="1">Elongation factor Ts</fullName>
        <shortName evidence="1">EF-Ts</shortName>
    </recommendedName>
</protein>
<keyword id="KW-0963">Cytoplasm</keyword>
<keyword id="KW-0251">Elongation factor</keyword>
<keyword id="KW-0648">Protein biosynthesis</keyword>
<keyword id="KW-1185">Reference proteome</keyword>
<name>EFTS_RHOCS</name>
<feature type="chain" id="PRO_1000116779" description="Elongation factor Ts">
    <location>
        <begin position="1"/>
        <end position="307"/>
    </location>
</feature>
<feature type="region of interest" description="Involved in Mg(2+) ion dislocation from EF-Tu" evidence="1">
    <location>
        <begin position="80"/>
        <end position="83"/>
    </location>
</feature>
<dbReference type="EMBL" id="CP000613">
    <property type="protein sequence ID" value="ACI98621.1"/>
    <property type="molecule type" value="Genomic_DNA"/>
</dbReference>
<dbReference type="RefSeq" id="WP_012566409.1">
    <property type="nucleotide sequence ID" value="NC_011420.2"/>
</dbReference>
<dbReference type="SMR" id="B6ISV0"/>
<dbReference type="STRING" id="414684.RC1_1207"/>
<dbReference type="KEGG" id="rce:RC1_1207"/>
<dbReference type="eggNOG" id="COG0264">
    <property type="taxonomic scope" value="Bacteria"/>
</dbReference>
<dbReference type="HOGENOM" id="CLU_047155_2_0_5"/>
<dbReference type="OrthoDB" id="9808348at2"/>
<dbReference type="Proteomes" id="UP000001591">
    <property type="component" value="Chromosome"/>
</dbReference>
<dbReference type="GO" id="GO:0005737">
    <property type="term" value="C:cytoplasm"/>
    <property type="evidence" value="ECO:0007669"/>
    <property type="project" value="UniProtKB-SubCell"/>
</dbReference>
<dbReference type="GO" id="GO:0003746">
    <property type="term" value="F:translation elongation factor activity"/>
    <property type="evidence" value="ECO:0007669"/>
    <property type="project" value="UniProtKB-UniRule"/>
</dbReference>
<dbReference type="CDD" id="cd14275">
    <property type="entry name" value="UBA_EF-Ts"/>
    <property type="match status" value="1"/>
</dbReference>
<dbReference type="FunFam" id="1.10.286.20:FF:000001">
    <property type="entry name" value="Elongation factor Ts"/>
    <property type="match status" value="1"/>
</dbReference>
<dbReference type="FunFam" id="1.10.8.10:FF:000001">
    <property type="entry name" value="Elongation factor Ts"/>
    <property type="match status" value="1"/>
</dbReference>
<dbReference type="Gene3D" id="1.10.286.20">
    <property type="match status" value="1"/>
</dbReference>
<dbReference type="Gene3D" id="1.10.8.10">
    <property type="entry name" value="DNA helicase RuvA subunit, C-terminal domain"/>
    <property type="match status" value="1"/>
</dbReference>
<dbReference type="Gene3D" id="3.30.479.20">
    <property type="entry name" value="Elongation factor Ts, dimerisation domain"/>
    <property type="match status" value="2"/>
</dbReference>
<dbReference type="HAMAP" id="MF_00050">
    <property type="entry name" value="EF_Ts"/>
    <property type="match status" value="1"/>
</dbReference>
<dbReference type="InterPro" id="IPR036402">
    <property type="entry name" value="EF-Ts_dimer_sf"/>
</dbReference>
<dbReference type="InterPro" id="IPR001816">
    <property type="entry name" value="Transl_elong_EFTs/EF1B"/>
</dbReference>
<dbReference type="InterPro" id="IPR014039">
    <property type="entry name" value="Transl_elong_EFTs/EF1B_dimer"/>
</dbReference>
<dbReference type="InterPro" id="IPR018101">
    <property type="entry name" value="Transl_elong_Ts_CS"/>
</dbReference>
<dbReference type="InterPro" id="IPR009060">
    <property type="entry name" value="UBA-like_sf"/>
</dbReference>
<dbReference type="NCBIfam" id="TIGR00116">
    <property type="entry name" value="tsf"/>
    <property type="match status" value="1"/>
</dbReference>
<dbReference type="PANTHER" id="PTHR11741">
    <property type="entry name" value="ELONGATION FACTOR TS"/>
    <property type="match status" value="1"/>
</dbReference>
<dbReference type="PANTHER" id="PTHR11741:SF0">
    <property type="entry name" value="ELONGATION FACTOR TS, MITOCHONDRIAL"/>
    <property type="match status" value="1"/>
</dbReference>
<dbReference type="Pfam" id="PF00889">
    <property type="entry name" value="EF_TS"/>
    <property type="match status" value="1"/>
</dbReference>
<dbReference type="SUPFAM" id="SSF54713">
    <property type="entry name" value="Elongation factor Ts (EF-Ts), dimerisation domain"/>
    <property type="match status" value="2"/>
</dbReference>
<dbReference type="SUPFAM" id="SSF46934">
    <property type="entry name" value="UBA-like"/>
    <property type="match status" value="1"/>
</dbReference>
<dbReference type="PROSITE" id="PS01126">
    <property type="entry name" value="EF_TS_1"/>
    <property type="match status" value="1"/>
</dbReference>
<dbReference type="PROSITE" id="PS01127">
    <property type="entry name" value="EF_TS_2"/>
    <property type="match status" value="1"/>
</dbReference>
<accession>B6ISV0</accession>
<evidence type="ECO:0000255" key="1">
    <source>
        <dbReference type="HAMAP-Rule" id="MF_00050"/>
    </source>
</evidence>
<comment type="function">
    <text evidence="1">Associates with the EF-Tu.GDP complex and induces the exchange of GDP to GTP. It remains bound to the aminoacyl-tRNA.EF-Tu.GTP complex up to the GTP hydrolysis stage on the ribosome.</text>
</comment>
<comment type="subcellular location">
    <subcellularLocation>
        <location evidence="1">Cytoplasm</location>
    </subcellularLocation>
</comment>
<comment type="similarity">
    <text evidence="1">Belongs to the EF-Ts family.</text>
</comment>
<gene>
    <name evidence="1" type="primary">tsf</name>
    <name type="ordered locus">RC1_1207</name>
</gene>
<organism>
    <name type="scientific">Rhodospirillum centenum (strain ATCC 51521 / SW)</name>
    <dbReference type="NCBI Taxonomy" id="414684"/>
    <lineage>
        <taxon>Bacteria</taxon>
        <taxon>Pseudomonadati</taxon>
        <taxon>Pseudomonadota</taxon>
        <taxon>Alphaproteobacteria</taxon>
        <taxon>Rhodospirillales</taxon>
        <taxon>Rhodospirillaceae</taxon>
        <taxon>Rhodospirillum</taxon>
    </lineage>
</organism>
<reference key="1">
    <citation type="submission" date="2007-03" db="EMBL/GenBank/DDBJ databases">
        <title>Genome sequence of Rhodospirillum centenum.</title>
        <authorList>
            <person name="Touchman J.W."/>
            <person name="Bauer C."/>
            <person name="Blankenship R.E."/>
        </authorList>
    </citation>
    <scope>NUCLEOTIDE SEQUENCE [LARGE SCALE GENOMIC DNA]</scope>
    <source>
        <strain>ATCC 51521 / SW</strain>
    </source>
</reference>
<sequence length="307" mass="32580">MAEISAALVKELREKTGAGMMDCKKALTETSGDMEAAVDWLRKKGLAAAAKKSGRVAAEGLVGVVAAPTAGACVEVNAETDFVARNETFQNFVAKVTELALTTGDDVEKLQSQPFPGTGRTVAEELTHLVATIGENMTIRRAARLSVTQGIVSTYMHSSLVPNLGKIGVLVALESAGDQAKLQELGKQIAMHIAAARPEALDIADVDPSKLNRERDVLADQARASGKPEEIVQKMVEGRVRKYYEEVVLLEQVFVVDGETKIRKVVENAGKTVGAPVKLTGFVRFALGEGIEKATSDFAAEVASMAG</sequence>
<proteinExistence type="inferred from homology"/>